<dbReference type="EMBL" id="AK013571">
    <property type="protein sequence ID" value="BAB28911.1"/>
    <property type="molecule type" value="mRNA"/>
</dbReference>
<dbReference type="EMBL" id="AK003735">
    <property type="protein sequence ID" value="BAB22969.1"/>
    <property type="molecule type" value="mRNA"/>
</dbReference>
<dbReference type="EMBL" id="BC019947">
    <property type="protein sequence ID" value="AAH19947.1"/>
    <property type="molecule type" value="mRNA"/>
</dbReference>
<dbReference type="EMBL" id="BC030298">
    <property type="protein sequence ID" value="AAH30298.1"/>
    <property type="molecule type" value="mRNA"/>
</dbReference>
<dbReference type="CCDS" id="CCDS38322.1"/>
<dbReference type="RefSeq" id="NP_001041692.1">
    <property type="nucleotide sequence ID" value="NM_001048227.1"/>
</dbReference>
<dbReference type="RefSeq" id="NP_001041693.1">
    <property type="nucleotide sequence ID" value="NM_001048228.1"/>
</dbReference>
<dbReference type="RefSeq" id="NP_001041694.1">
    <property type="nucleotide sequence ID" value="NM_001048229.1"/>
</dbReference>
<dbReference type="RefSeq" id="NP_081073.1">
    <property type="nucleotide sequence ID" value="NM_026797.2"/>
</dbReference>
<dbReference type="RefSeq" id="XP_006499958.1">
    <property type="nucleotide sequence ID" value="XM_006499895.3"/>
</dbReference>
<dbReference type="RefSeq" id="XP_030107724.1">
    <property type="nucleotide sequence ID" value="XM_030251864.2"/>
</dbReference>
<dbReference type="FunCoup" id="Q9CRD4">
    <property type="interactions" value="118"/>
</dbReference>
<dbReference type="STRING" id="10090.ENSMUSP00000104973"/>
<dbReference type="iPTMnet" id="Q9CRD4"/>
<dbReference type="PhosphoSitePlus" id="Q9CRD4"/>
<dbReference type="PaxDb" id="10090-ENSMUSP00000104973"/>
<dbReference type="ProteomicsDB" id="279154"/>
<dbReference type="Pumba" id="Q9CRD4"/>
<dbReference type="Antibodypedia" id="51972">
    <property type="antibodies" value="48 antibodies from 13 providers"/>
</dbReference>
<dbReference type="DNASU" id="52840"/>
<dbReference type="Ensembl" id="ENSMUST00000017878.3">
    <property type="protein sequence ID" value="ENSMUSP00000017878.3"/>
    <property type="gene ID" value="ENSMUSG00000017734.16"/>
</dbReference>
<dbReference type="Ensembl" id="ENSMUST00000069385.15">
    <property type="protein sequence ID" value="ENSMUSP00000064437.9"/>
    <property type="gene ID" value="ENSMUSG00000017734.16"/>
</dbReference>
<dbReference type="Ensembl" id="ENSMUST00000109349.9">
    <property type="protein sequence ID" value="ENSMUSP00000104973.3"/>
    <property type="gene ID" value="ENSMUSG00000017734.16"/>
</dbReference>
<dbReference type="Ensembl" id="ENSMUST00000109350.9">
    <property type="protein sequence ID" value="ENSMUSP00000104974.3"/>
    <property type="gene ID" value="ENSMUSG00000017734.16"/>
</dbReference>
<dbReference type="Ensembl" id="ENSMUST00000149287.8">
    <property type="protein sequence ID" value="ENSMUSP00000128551.2"/>
    <property type="gene ID" value="ENSMUSG00000017734.16"/>
</dbReference>
<dbReference type="GeneID" id="52840"/>
<dbReference type="KEGG" id="mmu:52840"/>
<dbReference type="UCSC" id="uc008nuw.1">
    <property type="organism name" value="mouse"/>
</dbReference>
<dbReference type="AGR" id="MGI:106562"/>
<dbReference type="CTD" id="55861"/>
<dbReference type="MGI" id="MGI:106562">
    <property type="gene designation" value="Dbndd2"/>
</dbReference>
<dbReference type="VEuPathDB" id="HostDB:ENSMUSG00000017734"/>
<dbReference type="eggNOG" id="ENOG502RZ1K">
    <property type="taxonomic scope" value="Eukaryota"/>
</dbReference>
<dbReference type="GeneTree" id="ENSGT00940000161212"/>
<dbReference type="InParanoid" id="Q9CRD4"/>
<dbReference type="OMA" id="CWLQRGS"/>
<dbReference type="OrthoDB" id="8951733at2759"/>
<dbReference type="PhylomeDB" id="Q9CRD4"/>
<dbReference type="BioGRID-ORCS" id="52840">
    <property type="hits" value="3 hits in 76 CRISPR screens"/>
</dbReference>
<dbReference type="ChiTaRS" id="Dbndd2">
    <property type="organism name" value="mouse"/>
</dbReference>
<dbReference type="PRO" id="PR:Q9CRD4"/>
<dbReference type="Proteomes" id="UP000000589">
    <property type="component" value="Chromosome 2"/>
</dbReference>
<dbReference type="RNAct" id="Q9CRD4">
    <property type="molecule type" value="protein"/>
</dbReference>
<dbReference type="Bgee" id="ENSMUSG00000017734">
    <property type="expression patterns" value="Expressed in lumbar subsegment of spinal cord and 163 other cell types or tissues"/>
</dbReference>
<dbReference type="ExpressionAtlas" id="Q9CRD4">
    <property type="expression patterns" value="baseline and differential"/>
</dbReference>
<dbReference type="GO" id="GO:0005783">
    <property type="term" value="C:endoplasmic reticulum"/>
    <property type="evidence" value="ECO:0000314"/>
    <property type="project" value="MGI"/>
</dbReference>
<dbReference type="GO" id="GO:0005764">
    <property type="term" value="C:lysosome"/>
    <property type="evidence" value="ECO:0000314"/>
    <property type="project" value="MGI"/>
</dbReference>
<dbReference type="GO" id="GO:0051117">
    <property type="term" value="F:ATPase binding"/>
    <property type="evidence" value="ECO:0000314"/>
    <property type="project" value="MGI"/>
</dbReference>
<dbReference type="GO" id="GO:0006915">
    <property type="term" value="P:apoptotic process"/>
    <property type="evidence" value="ECO:0000314"/>
    <property type="project" value="MGI"/>
</dbReference>
<dbReference type="GO" id="GO:0070371">
    <property type="term" value="P:ERK1 and ERK2 cascade"/>
    <property type="evidence" value="ECO:0000314"/>
    <property type="project" value="MGI"/>
</dbReference>
<dbReference type="GO" id="GO:0050801">
    <property type="term" value="P:monoatomic ion homeostasis"/>
    <property type="evidence" value="ECO:0000314"/>
    <property type="project" value="MGI"/>
</dbReference>
<dbReference type="GO" id="GO:0006469">
    <property type="term" value="P:negative regulation of protein kinase activity"/>
    <property type="evidence" value="ECO:0000250"/>
    <property type="project" value="UniProtKB"/>
</dbReference>
<dbReference type="GO" id="GO:0022008">
    <property type="term" value="P:neurogenesis"/>
    <property type="evidence" value="ECO:0000314"/>
    <property type="project" value="MGI"/>
</dbReference>
<dbReference type="GO" id="GO:0031175">
    <property type="term" value="P:neuron projection development"/>
    <property type="evidence" value="ECO:0000314"/>
    <property type="project" value="MGI"/>
</dbReference>
<dbReference type="InterPro" id="IPR007531">
    <property type="entry name" value="Dysbindin"/>
</dbReference>
<dbReference type="PANTHER" id="PTHR16294:SF7">
    <property type="entry name" value="DYSBINDIN DOMAIN-CONTAINING PROTEIN 2"/>
    <property type="match status" value="1"/>
</dbReference>
<dbReference type="PANTHER" id="PTHR16294">
    <property type="entry name" value="DYSTROBREVIN BINDING PROTEIN 1 DYSBINDIN"/>
    <property type="match status" value="1"/>
</dbReference>
<dbReference type="Pfam" id="PF04440">
    <property type="entry name" value="Dysbindin"/>
    <property type="match status" value="1"/>
</dbReference>
<feature type="chain" id="PRO_0000191004" description="Dysbindin domain-containing protein 2">
    <location>
        <begin position="1"/>
        <end position="158"/>
    </location>
</feature>
<feature type="region of interest" description="Disordered" evidence="2">
    <location>
        <begin position="79"/>
        <end position="158"/>
    </location>
</feature>
<feature type="compositionally biased region" description="Low complexity" evidence="2">
    <location>
        <begin position="106"/>
        <end position="131"/>
    </location>
</feature>
<feature type="compositionally biased region" description="Acidic residues" evidence="2">
    <location>
        <begin position="142"/>
        <end position="151"/>
    </location>
</feature>
<feature type="modified residue" description="Phosphoserine" evidence="4">
    <location>
        <position position="119"/>
    </location>
</feature>
<feature type="modified residue" description="Phosphoserine" evidence="4">
    <location>
        <position position="120"/>
    </location>
</feature>
<feature type="modified residue" description="Phosphothreonine" evidence="4">
    <location>
        <position position="137"/>
    </location>
</feature>
<feature type="modified residue" description="Phosphoserine" evidence="4">
    <location>
        <position position="142"/>
    </location>
</feature>
<reference key="1">
    <citation type="journal article" date="2005" name="Science">
        <title>The transcriptional landscape of the mammalian genome.</title>
        <authorList>
            <person name="Carninci P."/>
            <person name="Kasukawa T."/>
            <person name="Katayama S."/>
            <person name="Gough J."/>
            <person name="Frith M.C."/>
            <person name="Maeda N."/>
            <person name="Oyama R."/>
            <person name="Ravasi T."/>
            <person name="Lenhard B."/>
            <person name="Wells C."/>
            <person name="Kodzius R."/>
            <person name="Shimokawa K."/>
            <person name="Bajic V.B."/>
            <person name="Brenner S.E."/>
            <person name="Batalov S."/>
            <person name="Forrest A.R."/>
            <person name="Zavolan M."/>
            <person name="Davis M.J."/>
            <person name="Wilming L.G."/>
            <person name="Aidinis V."/>
            <person name="Allen J.E."/>
            <person name="Ambesi-Impiombato A."/>
            <person name="Apweiler R."/>
            <person name="Aturaliya R.N."/>
            <person name="Bailey T.L."/>
            <person name="Bansal M."/>
            <person name="Baxter L."/>
            <person name="Beisel K.W."/>
            <person name="Bersano T."/>
            <person name="Bono H."/>
            <person name="Chalk A.M."/>
            <person name="Chiu K.P."/>
            <person name="Choudhary V."/>
            <person name="Christoffels A."/>
            <person name="Clutterbuck D.R."/>
            <person name="Crowe M.L."/>
            <person name="Dalla E."/>
            <person name="Dalrymple B.P."/>
            <person name="de Bono B."/>
            <person name="Della Gatta G."/>
            <person name="di Bernardo D."/>
            <person name="Down T."/>
            <person name="Engstrom P."/>
            <person name="Fagiolini M."/>
            <person name="Faulkner G."/>
            <person name="Fletcher C.F."/>
            <person name="Fukushima T."/>
            <person name="Furuno M."/>
            <person name="Futaki S."/>
            <person name="Gariboldi M."/>
            <person name="Georgii-Hemming P."/>
            <person name="Gingeras T.R."/>
            <person name="Gojobori T."/>
            <person name="Green R.E."/>
            <person name="Gustincich S."/>
            <person name="Harbers M."/>
            <person name="Hayashi Y."/>
            <person name="Hensch T.K."/>
            <person name="Hirokawa N."/>
            <person name="Hill D."/>
            <person name="Huminiecki L."/>
            <person name="Iacono M."/>
            <person name="Ikeo K."/>
            <person name="Iwama A."/>
            <person name="Ishikawa T."/>
            <person name="Jakt M."/>
            <person name="Kanapin A."/>
            <person name="Katoh M."/>
            <person name="Kawasawa Y."/>
            <person name="Kelso J."/>
            <person name="Kitamura H."/>
            <person name="Kitano H."/>
            <person name="Kollias G."/>
            <person name="Krishnan S.P."/>
            <person name="Kruger A."/>
            <person name="Kummerfeld S.K."/>
            <person name="Kurochkin I.V."/>
            <person name="Lareau L.F."/>
            <person name="Lazarevic D."/>
            <person name="Lipovich L."/>
            <person name="Liu J."/>
            <person name="Liuni S."/>
            <person name="McWilliam S."/>
            <person name="Madan Babu M."/>
            <person name="Madera M."/>
            <person name="Marchionni L."/>
            <person name="Matsuda H."/>
            <person name="Matsuzawa S."/>
            <person name="Miki H."/>
            <person name="Mignone F."/>
            <person name="Miyake S."/>
            <person name="Morris K."/>
            <person name="Mottagui-Tabar S."/>
            <person name="Mulder N."/>
            <person name="Nakano N."/>
            <person name="Nakauchi H."/>
            <person name="Ng P."/>
            <person name="Nilsson R."/>
            <person name="Nishiguchi S."/>
            <person name="Nishikawa S."/>
            <person name="Nori F."/>
            <person name="Ohara O."/>
            <person name="Okazaki Y."/>
            <person name="Orlando V."/>
            <person name="Pang K.C."/>
            <person name="Pavan W.J."/>
            <person name="Pavesi G."/>
            <person name="Pesole G."/>
            <person name="Petrovsky N."/>
            <person name="Piazza S."/>
            <person name="Reed J."/>
            <person name="Reid J.F."/>
            <person name="Ring B.Z."/>
            <person name="Ringwald M."/>
            <person name="Rost B."/>
            <person name="Ruan Y."/>
            <person name="Salzberg S.L."/>
            <person name="Sandelin A."/>
            <person name="Schneider C."/>
            <person name="Schoenbach C."/>
            <person name="Sekiguchi K."/>
            <person name="Semple C.A."/>
            <person name="Seno S."/>
            <person name="Sessa L."/>
            <person name="Sheng Y."/>
            <person name="Shibata Y."/>
            <person name="Shimada H."/>
            <person name="Shimada K."/>
            <person name="Silva D."/>
            <person name="Sinclair B."/>
            <person name="Sperling S."/>
            <person name="Stupka E."/>
            <person name="Sugiura K."/>
            <person name="Sultana R."/>
            <person name="Takenaka Y."/>
            <person name="Taki K."/>
            <person name="Tammoja K."/>
            <person name="Tan S.L."/>
            <person name="Tang S."/>
            <person name="Taylor M.S."/>
            <person name="Tegner J."/>
            <person name="Teichmann S.A."/>
            <person name="Ueda H.R."/>
            <person name="van Nimwegen E."/>
            <person name="Verardo R."/>
            <person name="Wei C.L."/>
            <person name="Yagi K."/>
            <person name="Yamanishi H."/>
            <person name="Zabarovsky E."/>
            <person name="Zhu S."/>
            <person name="Zimmer A."/>
            <person name="Hide W."/>
            <person name="Bult C."/>
            <person name="Grimmond S.M."/>
            <person name="Teasdale R.D."/>
            <person name="Liu E.T."/>
            <person name="Brusic V."/>
            <person name="Quackenbush J."/>
            <person name="Wahlestedt C."/>
            <person name="Mattick J.S."/>
            <person name="Hume D.A."/>
            <person name="Kai C."/>
            <person name="Sasaki D."/>
            <person name="Tomaru Y."/>
            <person name="Fukuda S."/>
            <person name="Kanamori-Katayama M."/>
            <person name="Suzuki M."/>
            <person name="Aoki J."/>
            <person name="Arakawa T."/>
            <person name="Iida J."/>
            <person name="Imamura K."/>
            <person name="Itoh M."/>
            <person name="Kato T."/>
            <person name="Kawaji H."/>
            <person name="Kawagashira N."/>
            <person name="Kawashima T."/>
            <person name="Kojima M."/>
            <person name="Kondo S."/>
            <person name="Konno H."/>
            <person name="Nakano K."/>
            <person name="Ninomiya N."/>
            <person name="Nishio T."/>
            <person name="Okada M."/>
            <person name="Plessy C."/>
            <person name="Shibata K."/>
            <person name="Shiraki T."/>
            <person name="Suzuki S."/>
            <person name="Tagami M."/>
            <person name="Waki K."/>
            <person name="Watahiki A."/>
            <person name="Okamura-Oho Y."/>
            <person name="Suzuki H."/>
            <person name="Kawai J."/>
            <person name="Hayashizaki Y."/>
        </authorList>
    </citation>
    <scope>NUCLEOTIDE SEQUENCE [LARGE SCALE MRNA]</scope>
    <source>
        <strain>C57BL/6J</strain>
        <tissue>Hippocampus</tissue>
    </source>
</reference>
<reference key="2">
    <citation type="journal article" date="2004" name="Genome Res.">
        <title>The status, quality, and expansion of the NIH full-length cDNA project: the Mammalian Gene Collection (MGC).</title>
        <authorList>
            <consortium name="The MGC Project Team"/>
        </authorList>
    </citation>
    <scope>NUCLEOTIDE SEQUENCE [LARGE SCALE MRNA]</scope>
    <source>
        <tissue>Mammary tumor</tissue>
        <tissue>Retina</tissue>
    </source>
</reference>
<reference key="3">
    <citation type="journal article" date="2010" name="Cell">
        <title>A tissue-specific atlas of mouse protein phosphorylation and expression.</title>
        <authorList>
            <person name="Huttlin E.L."/>
            <person name="Jedrychowski M.P."/>
            <person name="Elias J.E."/>
            <person name="Goswami T."/>
            <person name="Rad R."/>
            <person name="Beausoleil S.A."/>
            <person name="Villen J."/>
            <person name="Haas W."/>
            <person name="Sowa M.E."/>
            <person name="Gygi S.P."/>
        </authorList>
    </citation>
    <scope>PHOSPHORYLATION [LARGE SCALE ANALYSIS] AT SER-119; SER-120; THR-137 AND SER-142</scope>
    <scope>IDENTIFICATION BY MASS SPECTROMETRY [LARGE SCALE ANALYSIS]</scope>
    <source>
        <tissue>Brain</tissue>
        <tissue>Heart</tissue>
        <tissue>Kidney</tissue>
        <tissue>Lung</tissue>
        <tissue>Spleen</tissue>
    </source>
</reference>
<protein>
    <recommendedName>
        <fullName>Dysbindin domain-containing protein 2</fullName>
    </recommendedName>
</protein>
<name>DBND2_MOUSE</name>
<keyword id="KW-0597">Phosphoprotein</keyword>
<keyword id="KW-1185">Reference proteome</keyword>
<evidence type="ECO:0000250" key="1"/>
<evidence type="ECO:0000256" key="2">
    <source>
        <dbReference type="SAM" id="MobiDB-lite"/>
    </source>
</evidence>
<evidence type="ECO:0000305" key="3"/>
<evidence type="ECO:0007744" key="4">
    <source>
    </source>
</evidence>
<comment type="function">
    <text evidence="1">May modulate the activity of casein kinase-1. Inhibits CSNK1D autophosphorylation (in vitro) (By similarity).</text>
</comment>
<comment type="subunit">
    <text evidence="1">Monomer. Interacts with CSNK1D and CSNK1E (By similarity).</text>
</comment>
<comment type="similarity">
    <text evidence="3">Belongs to the dysbindin family.</text>
</comment>
<organism>
    <name type="scientific">Mus musculus</name>
    <name type="common">Mouse</name>
    <dbReference type="NCBI Taxonomy" id="10090"/>
    <lineage>
        <taxon>Eukaryota</taxon>
        <taxon>Metazoa</taxon>
        <taxon>Chordata</taxon>
        <taxon>Craniata</taxon>
        <taxon>Vertebrata</taxon>
        <taxon>Euteleostomi</taxon>
        <taxon>Mammalia</taxon>
        <taxon>Eutheria</taxon>
        <taxon>Euarchontoglires</taxon>
        <taxon>Glires</taxon>
        <taxon>Rodentia</taxon>
        <taxon>Myomorpha</taxon>
        <taxon>Muroidea</taxon>
        <taxon>Muridae</taxon>
        <taxon>Murinae</taxon>
        <taxon>Mus</taxon>
        <taxon>Mus</taxon>
    </lineage>
</organism>
<accession>Q9CRD4</accession>
<sequence>MDPNPRAALERQQLRLRERQKFFEDILQPETEFVFPLSHLHLESQRPPIGSISSMEVNVDTLEQVEFIDLADQDGADVFLPCEESSPAPQMSGVDDHPEELSLLVPTSDRTTSRTSSLSSDSSNLRSPNPSDGGGDTPLAQSDEEDGDDGGAEPGPCS</sequence>
<proteinExistence type="evidence at protein level"/>
<gene>
    <name type="primary">Dbndd2</name>
    <name type="synonym">D2Bwg0891e</name>
</gene>